<protein>
    <recommendedName>
        <fullName evidence="1">ATP-dependent protease subunit HslV</fullName>
        <ecNumber evidence="1">3.4.25.2</ecNumber>
    </recommendedName>
</protein>
<keyword id="KW-0021">Allosteric enzyme</keyword>
<keyword id="KW-0963">Cytoplasm</keyword>
<keyword id="KW-0378">Hydrolase</keyword>
<keyword id="KW-0479">Metal-binding</keyword>
<keyword id="KW-0645">Protease</keyword>
<keyword id="KW-1185">Reference proteome</keyword>
<keyword id="KW-0915">Sodium</keyword>
<keyword id="KW-0888">Threonine protease</keyword>
<reference key="1">
    <citation type="journal article" date="2007" name="PLoS Genet.">
        <title>A tale of two oxidation states: bacterial colonization of arsenic-rich environments.</title>
        <authorList>
            <person name="Muller D."/>
            <person name="Medigue C."/>
            <person name="Koechler S."/>
            <person name="Barbe V."/>
            <person name="Barakat M."/>
            <person name="Talla E."/>
            <person name="Bonnefoy V."/>
            <person name="Krin E."/>
            <person name="Arsene-Ploetze F."/>
            <person name="Carapito C."/>
            <person name="Chandler M."/>
            <person name="Cournoyer B."/>
            <person name="Cruveiller S."/>
            <person name="Dossat C."/>
            <person name="Duval S."/>
            <person name="Heymann M."/>
            <person name="Leize E."/>
            <person name="Lieutaud A."/>
            <person name="Lievremont D."/>
            <person name="Makita Y."/>
            <person name="Mangenot S."/>
            <person name="Nitschke W."/>
            <person name="Ortet P."/>
            <person name="Perdrial N."/>
            <person name="Schoepp B."/>
            <person name="Siguier P."/>
            <person name="Simeonova D.D."/>
            <person name="Rouy Z."/>
            <person name="Segurens B."/>
            <person name="Turlin E."/>
            <person name="Vallenet D."/>
            <person name="van Dorsselaer A."/>
            <person name="Weiss S."/>
            <person name="Weissenbach J."/>
            <person name="Lett M.-C."/>
            <person name="Danchin A."/>
            <person name="Bertin P.N."/>
        </authorList>
    </citation>
    <scope>NUCLEOTIDE SEQUENCE [LARGE SCALE GENOMIC DNA]</scope>
    <source>
        <strain>ULPAs1</strain>
    </source>
</reference>
<accession>A4G989</accession>
<gene>
    <name evidence="1" type="primary">hslV</name>
    <name type="ordered locus">HEAR2966</name>
</gene>
<feature type="chain" id="PRO_1000012621" description="ATP-dependent protease subunit HslV">
    <location>
        <begin position="1"/>
        <end position="178"/>
    </location>
</feature>
<feature type="active site" evidence="1">
    <location>
        <position position="7"/>
    </location>
</feature>
<feature type="binding site" evidence="1">
    <location>
        <position position="162"/>
    </location>
    <ligand>
        <name>Na(+)</name>
        <dbReference type="ChEBI" id="CHEBI:29101"/>
    </ligand>
</feature>
<feature type="binding site" evidence="1">
    <location>
        <position position="165"/>
    </location>
    <ligand>
        <name>Na(+)</name>
        <dbReference type="ChEBI" id="CHEBI:29101"/>
    </ligand>
</feature>
<feature type="binding site" evidence="1">
    <location>
        <position position="168"/>
    </location>
    <ligand>
        <name>Na(+)</name>
        <dbReference type="ChEBI" id="CHEBI:29101"/>
    </ligand>
</feature>
<organism>
    <name type="scientific">Herminiimonas arsenicoxydans</name>
    <dbReference type="NCBI Taxonomy" id="204773"/>
    <lineage>
        <taxon>Bacteria</taxon>
        <taxon>Pseudomonadati</taxon>
        <taxon>Pseudomonadota</taxon>
        <taxon>Betaproteobacteria</taxon>
        <taxon>Burkholderiales</taxon>
        <taxon>Oxalobacteraceae</taxon>
        <taxon>Herminiimonas</taxon>
    </lineage>
</organism>
<comment type="function">
    <text evidence="1">Protease subunit of a proteasome-like degradation complex believed to be a general protein degrading machinery.</text>
</comment>
<comment type="catalytic activity">
    <reaction evidence="1">
        <text>ATP-dependent cleavage of peptide bonds with broad specificity.</text>
        <dbReference type="EC" id="3.4.25.2"/>
    </reaction>
</comment>
<comment type="activity regulation">
    <text evidence="1">Allosterically activated by HslU binding.</text>
</comment>
<comment type="subunit">
    <text evidence="1">A double ring-shaped homohexamer of HslV is capped on each side by a ring-shaped HslU homohexamer. The assembly of the HslU/HslV complex is dependent on binding of ATP.</text>
</comment>
<comment type="subcellular location">
    <subcellularLocation>
        <location evidence="1">Cytoplasm</location>
    </subcellularLocation>
</comment>
<comment type="similarity">
    <text evidence="1">Belongs to the peptidase T1B family. HslV subfamily.</text>
</comment>
<sequence length="178" mass="19194">MEQFHGTTILSVRRGNVVALGGDGQVTLGNIVMKGTARKVRKVYSGKVLVGFAGGTADAFTLLERFESKLEKHQGHLMRASVELAKDWRTDRMLRRLEAMLLVADHETTLVITGNGDVLEPNDGIGAIGSGGTYAQSAAKALQENTELSPLEIVKKSLTIAGELCIYTNLSHTIETLD</sequence>
<dbReference type="EC" id="3.4.25.2" evidence="1"/>
<dbReference type="EMBL" id="CU207211">
    <property type="protein sequence ID" value="CAL63076.1"/>
    <property type="molecule type" value="Genomic_DNA"/>
</dbReference>
<dbReference type="SMR" id="A4G989"/>
<dbReference type="STRING" id="204773.HEAR2966"/>
<dbReference type="MEROPS" id="T01.006"/>
<dbReference type="KEGG" id="har:HEAR2966"/>
<dbReference type="eggNOG" id="COG5405">
    <property type="taxonomic scope" value="Bacteria"/>
</dbReference>
<dbReference type="HOGENOM" id="CLU_093872_1_0_4"/>
<dbReference type="OrthoDB" id="9804884at2"/>
<dbReference type="Proteomes" id="UP000006697">
    <property type="component" value="Chromosome"/>
</dbReference>
<dbReference type="GO" id="GO:0009376">
    <property type="term" value="C:HslUV protease complex"/>
    <property type="evidence" value="ECO:0007669"/>
    <property type="project" value="UniProtKB-UniRule"/>
</dbReference>
<dbReference type="GO" id="GO:0005839">
    <property type="term" value="C:proteasome core complex"/>
    <property type="evidence" value="ECO:0007669"/>
    <property type="project" value="InterPro"/>
</dbReference>
<dbReference type="GO" id="GO:0046872">
    <property type="term" value="F:metal ion binding"/>
    <property type="evidence" value="ECO:0007669"/>
    <property type="project" value="UniProtKB-KW"/>
</dbReference>
<dbReference type="GO" id="GO:0004298">
    <property type="term" value="F:threonine-type endopeptidase activity"/>
    <property type="evidence" value="ECO:0007669"/>
    <property type="project" value="UniProtKB-KW"/>
</dbReference>
<dbReference type="GO" id="GO:0051603">
    <property type="term" value="P:proteolysis involved in protein catabolic process"/>
    <property type="evidence" value="ECO:0007669"/>
    <property type="project" value="InterPro"/>
</dbReference>
<dbReference type="CDD" id="cd01913">
    <property type="entry name" value="protease_HslV"/>
    <property type="match status" value="1"/>
</dbReference>
<dbReference type="FunFam" id="3.60.20.10:FF:000002">
    <property type="entry name" value="ATP-dependent protease subunit HslV"/>
    <property type="match status" value="1"/>
</dbReference>
<dbReference type="Gene3D" id="3.60.20.10">
    <property type="entry name" value="Glutamine Phosphoribosylpyrophosphate, subunit 1, domain 1"/>
    <property type="match status" value="1"/>
</dbReference>
<dbReference type="HAMAP" id="MF_00248">
    <property type="entry name" value="HslV"/>
    <property type="match status" value="1"/>
</dbReference>
<dbReference type="InterPro" id="IPR022281">
    <property type="entry name" value="ATP-dep_Prtase_HsIV_su"/>
</dbReference>
<dbReference type="InterPro" id="IPR029055">
    <property type="entry name" value="Ntn_hydrolases_N"/>
</dbReference>
<dbReference type="InterPro" id="IPR001353">
    <property type="entry name" value="Proteasome_sua/b"/>
</dbReference>
<dbReference type="InterPro" id="IPR023333">
    <property type="entry name" value="Proteasome_suB-type"/>
</dbReference>
<dbReference type="NCBIfam" id="TIGR03692">
    <property type="entry name" value="ATP_dep_HslV"/>
    <property type="match status" value="1"/>
</dbReference>
<dbReference type="NCBIfam" id="NF003964">
    <property type="entry name" value="PRK05456.1"/>
    <property type="match status" value="1"/>
</dbReference>
<dbReference type="PANTHER" id="PTHR32194:SF0">
    <property type="entry name" value="ATP-DEPENDENT PROTEASE SUBUNIT HSLV"/>
    <property type="match status" value="1"/>
</dbReference>
<dbReference type="PANTHER" id="PTHR32194">
    <property type="entry name" value="METALLOPROTEASE TLDD"/>
    <property type="match status" value="1"/>
</dbReference>
<dbReference type="Pfam" id="PF00227">
    <property type="entry name" value="Proteasome"/>
    <property type="match status" value="1"/>
</dbReference>
<dbReference type="PIRSF" id="PIRSF039093">
    <property type="entry name" value="HslV"/>
    <property type="match status" value="1"/>
</dbReference>
<dbReference type="SUPFAM" id="SSF56235">
    <property type="entry name" value="N-terminal nucleophile aminohydrolases (Ntn hydrolases)"/>
    <property type="match status" value="1"/>
</dbReference>
<dbReference type="PROSITE" id="PS51476">
    <property type="entry name" value="PROTEASOME_BETA_2"/>
    <property type="match status" value="1"/>
</dbReference>
<name>HSLV_HERAR</name>
<evidence type="ECO:0000255" key="1">
    <source>
        <dbReference type="HAMAP-Rule" id="MF_00248"/>
    </source>
</evidence>
<proteinExistence type="inferred from homology"/>